<reference key="1">
    <citation type="journal article" date="1999" name="Plant J.">
        <title>Plant interstitial telomere motifs participate in the control of gene expression in root meristems.</title>
        <authorList>
            <person name="Tremousaygue D."/>
            <person name="Manevski A."/>
            <person name="Bardet C."/>
            <person name="Lescure N."/>
            <person name="Lescure B."/>
        </authorList>
    </citation>
    <scope>NUCLEOTIDE SEQUENCE [MRNA] (ISOFORM 1)</scope>
    <scope>FUNCTION</scope>
</reference>
<reference key="2">
    <citation type="journal article" date="1999" name="Nature">
        <title>Sequence and analysis of chromosome 2 of the plant Arabidopsis thaliana.</title>
        <authorList>
            <person name="Lin X."/>
            <person name="Kaul S."/>
            <person name="Rounsley S.D."/>
            <person name="Shea T.P."/>
            <person name="Benito M.-I."/>
            <person name="Town C.D."/>
            <person name="Fujii C.Y."/>
            <person name="Mason T.M."/>
            <person name="Bowman C.L."/>
            <person name="Barnstead M.E."/>
            <person name="Feldblyum T.V."/>
            <person name="Buell C.R."/>
            <person name="Ketchum K.A."/>
            <person name="Lee J.J."/>
            <person name="Ronning C.M."/>
            <person name="Koo H.L."/>
            <person name="Moffat K.S."/>
            <person name="Cronin L.A."/>
            <person name="Shen M."/>
            <person name="Pai G."/>
            <person name="Van Aken S."/>
            <person name="Umayam L."/>
            <person name="Tallon L.J."/>
            <person name="Gill J.E."/>
            <person name="Adams M.D."/>
            <person name="Carrera A.J."/>
            <person name="Creasy T.H."/>
            <person name="Goodman H.M."/>
            <person name="Somerville C.R."/>
            <person name="Copenhaver G.P."/>
            <person name="Preuss D."/>
            <person name="Nierman W.C."/>
            <person name="White O."/>
            <person name="Eisen J.A."/>
            <person name="Salzberg S.L."/>
            <person name="Fraser C.M."/>
            <person name="Venter J.C."/>
        </authorList>
    </citation>
    <scope>NUCLEOTIDE SEQUENCE [LARGE SCALE GENOMIC DNA]</scope>
    <source>
        <strain>cv. Columbia</strain>
    </source>
</reference>
<reference key="3">
    <citation type="journal article" date="2017" name="Plant J.">
        <title>Araport11: a complete reannotation of the Arabidopsis thaliana reference genome.</title>
        <authorList>
            <person name="Cheng C.Y."/>
            <person name="Krishnakumar V."/>
            <person name="Chan A.P."/>
            <person name="Thibaud-Nissen F."/>
            <person name="Schobel S."/>
            <person name="Town C.D."/>
        </authorList>
    </citation>
    <scope>GENOME REANNOTATION</scope>
    <source>
        <strain>cv. Columbia</strain>
    </source>
</reference>
<reference key="4">
    <citation type="journal article" date="2003" name="Science">
        <title>Empirical analysis of transcriptional activity in the Arabidopsis genome.</title>
        <authorList>
            <person name="Yamada K."/>
            <person name="Lim J."/>
            <person name="Dale J.M."/>
            <person name="Chen H."/>
            <person name="Shinn P."/>
            <person name="Palm C.J."/>
            <person name="Southwick A.M."/>
            <person name="Wu H.C."/>
            <person name="Kim C.J."/>
            <person name="Nguyen M."/>
            <person name="Pham P.K."/>
            <person name="Cheuk R.F."/>
            <person name="Karlin-Newmann G."/>
            <person name="Liu S.X."/>
            <person name="Lam B."/>
            <person name="Sakano H."/>
            <person name="Wu T."/>
            <person name="Yu G."/>
            <person name="Miranda M."/>
            <person name="Quach H.L."/>
            <person name="Tripp M."/>
            <person name="Chang C.H."/>
            <person name="Lee J.M."/>
            <person name="Toriumi M.J."/>
            <person name="Chan M.M."/>
            <person name="Tang C.C."/>
            <person name="Onodera C.S."/>
            <person name="Deng J.M."/>
            <person name="Akiyama K."/>
            <person name="Ansari Y."/>
            <person name="Arakawa T."/>
            <person name="Banh J."/>
            <person name="Banno F."/>
            <person name="Bowser L."/>
            <person name="Brooks S.Y."/>
            <person name="Carninci P."/>
            <person name="Chao Q."/>
            <person name="Choy N."/>
            <person name="Enju A."/>
            <person name="Goldsmith A.D."/>
            <person name="Gurjal M."/>
            <person name="Hansen N.F."/>
            <person name="Hayashizaki Y."/>
            <person name="Johnson-Hopson C."/>
            <person name="Hsuan V.W."/>
            <person name="Iida K."/>
            <person name="Karnes M."/>
            <person name="Khan S."/>
            <person name="Koesema E."/>
            <person name="Ishida J."/>
            <person name="Jiang P.X."/>
            <person name="Jones T."/>
            <person name="Kawai J."/>
            <person name="Kamiya A."/>
            <person name="Meyers C."/>
            <person name="Nakajima M."/>
            <person name="Narusaka M."/>
            <person name="Seki M."/>
            <person name="Sakurai T."/>
            <person name="Satou M."/>
            <person name="Tamse R."/>
            <person name="Vaysberg M."/>
            <person name="Wallender E.K."/>
            <person name="Wong C."/>
            <person name="Yamamura Y."/>
            <person name="Yuan S."/>
            <person name="Shinozaki K."/>
            <person name="Davis R.W."/>
            <person name="Theologis A."/>
            <person name="Ecker J.R."/>
        </authorList>
    </citation>
    <scope>NUCLEOTIDE SEQUENCE [LARGE SCALE MRNA] (ISOFORMS 1 AND 2)</scope>
    <source>
        <strain>cv. Columbia</strain>
    </source>
</reference>
<reference key="5">
    <citation type="journal article" date="2003" name="Plant J.">
        <title>Internal telomeric repeats and 'TCP domain' protein-binding sites co-operate to regulate gene expression in Arabidopsis thaliana cycling cells.</title>
        <authorList>
            <person name="Tremousaygue D."/>
            <person name="Garnier L."/>
            <person name="Bardet C."/>
            <person name="Dabos P."/>
            <person name="Herve C."/>
            <person name="Lescure B."/>
        </authorList>
    </citation>
    <scope>HOMODIMERIZATION</scope>
    <scope>INTERACTION WITH TCP20</scope>
</reference>
<reference key="6">
    <citation type="journal article" date="2009" name="J. Proteomics">
        <title>Phosphoproteomic analysis of nuclei-enriched fractions from Arabidopsis thaliana.</title>
        <authorList>
            <person name="Jones A.M.E."/>
            <person name="MacLean D."/>
            <person name="Studholme D.J."/>
            <person name="Serna-Sanz A."/>
            <person name="Andreasson E."/>
            <person name="Rathjen J.P."/>
            <person name="Peck S.C."/>
        </authorList>
    </citation>
    <scope>SUBCELLULAR LOCATION</scope>
    <scope>PHOSPHORYLATION [LARGE SCALE ANALYSIS] AT SER-207</scope>
    <scope>IDENTIFICATION BY MASS SPECTROMETRY [LARGE SCALE ANALYSIS]</scope>
    <source>
        <strain>cv. Columbia</strain>
    </source>
</reference>
<reference key="7">
    <citation type="journal article" date="2009" name="Plant Physiol.">
        <title>Large-scale Arabidopsis phosphoproteome profiling reveals novel chloroplast kinase substrates and phosphorylation networks.</title>
        <authorList>
            <person name="Reiland S."/>
            <person name="Messerli G."/>
            <person name="Baerenfaller K."/>
            <person name="Gerrits B."/>
            <person name="Endler A."/>
            <person name="Grossmann J."/>
            <person name="Gruissem W."/>
            <person name="Baginsky S."/>
        </authorList>
    </citation>
    <scope>PHOSPHORYLATION [LARGE SCALE ANALYSIS] AT SER-207</scope>
    <scope>IDENTIFICATION BY MASS SPECTROMETRY [LARGE SCALE ANALYSIS]</scope>
</reference>
<reference key="8">
    <citation type="journal article" date="2012" name="Mol. Cell. Proteomics">
        <title>Comparative large-scale characterisation of plant vs. mammal proteins reveals similar and idiosyncratic N-alpha acetylation features.</title>
        <authorList>
            <person name="Bienvenut W.V."/>
            <person name="Sumpton D."/>
            <person name="Martinez A."/>
            <person name="Lilla S."/>
            <person name="Espagne C."/>
            <person name="Meinnel T."/>
            <person name="Giglione C."/>
        </authorList>
    </citation>
    <scope>ACETYLATION [LARGE SCALE ANALYSIS] AT MET-1</scope>
    <scope>IDENTIFICATION BY MASS SPECTROMETRY [LARGE SCALE ANALYSIS]</scope>
</reference>
<organism>
    <name type="scientific">Arabidopsis thaliana</name>
    <name type="common">Mouse-ear cress</name>
    <dbReference type="NCBI Taxonomy" id="3702"/>
    <lineage>
        <taxon>Eukaryota</taxon>
        <taxon>Viridiplantae</taxon>
        <taxon>Streptophyta</taxon>
        <taxon>Embryophyta</taxon>
        <taxon>Tracheophyta</taxon>
        <taxon>Spermatophyta</taxon>
        <taxon>Magnoliopsida</taxon>
        <taxon>eudicotyledons</taxon>
        <taxon>Gunneridae</taxon>
        <taxon>Pentapetalae</taxon>
        <taxon>rosids</taxon>
        <taxon>malvids</taxon>
        <taxon>Brassicales</taxon>
        <taxon>Brassicaceae</taxon>
        <taxon>Camelineae</taxon>
        <taxon>Arabidopsis</taxon>
    </lineage>
</organism>
<evidence type="ECO:0000256" key="1">
    <source>
        <dbReference type="SAM" id="MobiDB-lite"/>
    </source>
</evidence>
<evidence type="ECO:0000269" key="2">
    <source>
    </source>
</evidence>
<evidence type="ECO:0000269" key="3">
    <source>
    </source>
</evidence>
<evidence type="ECO:0000269" key="4">
    <source>
    </source>
</evidence>
<evidence type="ECO:0000303" key="5">
    <source>
    </source>
</evidence>
<evidence type="ECO:0000305" key="6"/>
<evidence type="ECO:0007744" key="7">
    <source>
    </source>
</evidence>
<evidence type="ECO:0007744" key="8">
    <source>
    </source>
</evidence>
<evidence type="ECO:0007744" key="9">
    <source>
    </source>
</evidence>
<proteinExistence type="evidence at protein level"/>
<gene>
    <name type="primary">PURA1</name>
    <name type="ordered locus">At2g32080</name>
    <name type="ORF">F22D22.17</name>
</gene>
<comment type="function">
    <text evidence="2">Transcription factor that specifically binds the purine-rich double-stranded telomeric repeated sequence 5'-AAACCCTAA-3' found in promoter telo boxes.</text>
</comment>
<comment type="subunit">
    <text evidence="3">Homodimer. Interacts with TCP20.</text>
</comment>
<comment type="subcellular location">
    <subcellularLocation>
        <location evidence="4">Nucleus</location>
    </subcellularLocation>
</comment>
<comment type="alternative products">
    <event type="alternative splicing"/>
    <isoform>
        <id>Q9SKZ1-1</id>
        <name>1</name>
        <sequence type="displayed"/>
    </isoform>
    <isoform>
        <id>Q9SKZ1-2</id>
        <name>2</name>
        <sequence type="described" ref="VSP_033113"/>
    </isoform>
</comment>
<comment type="miscellaneous">
    <molecule>Isoform 2</molecule>
    <text evidence="6">May be due to a competing donor splice site.</text>
</comment>
<comment type="similarity">
    <text evidence="6">Belongs to the PUR DNA-binding protein family.</text>
</comment>
<accession>Q9SKZ1</accession>
<accession>Q8W590</accession>
<accession>Q9XHC4</accession>
<keyword id="KW-0007">Acetylation</keyword>
<keyword id="KW-0025">Alternative splicing</keyword>
<keyword id="KW-0238">DNA-binding</keyword>
<keyword id="KW-0539">Nucleus</keyword>
<keyword id="KW-0597">Phosphoprotein</keyword>
<keyword id="KW-1185">Reference proteome</keyword>
<keyword id="KW-0804">Transcription</keyword>
<keyword id="KW-0805">Transcription regulation</keyword>
<protein>
    <recommendedName>
        <fullName>Transcription factor Pur-alpha 1</fullName>
    </recommendedName>
    <alternativeName>
        <fullName>Purine-rich single-stranded DNA-binding protein alpha 1</fullName>
    </alternativeName>
</protein>
<dbReference type="EMBL" id="AF136152">
    <property type="protein sequence ID" value="AAD39465.1"/>
    <property type="molecule type" value="mRNA"/>
</dbReference>
<dbReference type="EMBL" id="AC006223">
    <property type="protein sequence ID" value="AAD15396.2"/>
    <property type="molecule type" value="Genomic_DNA"/>
</dbReference>
<dbReference type="EMBL" id="CP002685">
    <property type="protein sequence ID" value="AEC08631.1"/>
    <property type="molecule type" value="Genomic_DNA"/>
</dbReference>
<dbReference type="EMBL" id="CP002685">
    <property type="protein sequence ID" value="AEC08632.1"/>
    <property type="molecule type" value="Genomic_DNA"/>
</dbReference>
<dbReference type="EMBL" id="AF419556">
    <property type="protein sequence ID" value="AAL31888.1"/>
    <property type="molecule type" value="mRNA"/>
</dbReference>
<dbReference type="EMBL" id="AF446882">
    <property type="protein sequence ID" value="AAL38615.1"/>
    <property type="molecule type" value="mRNA"/>
</dbReference>
<dbReference type="EMBL" id="AY052714">
    <property type="protein sequence ID" value="AAK96618.1"/>
    <property type="molecule type" value="mRNA"/>
</dbReference>
<dbReference type="PIR" id="G84728">
    <property type="entry name" value="G84728"/>
</dbReference>
<dbReference type="RefSeq" id="NP_565736.1">
    <molecule id="Q9SKZ1-1"/>
    <property type="nucleotide sequence ID" value="NM_128768.3"/>
</dbReference>
<dbReference type="RefSeq" id="NP_850182.1">
    <molecule id="Q9SKZ1-2"/>
    <property type="nucleotide sequence ID" value="NM_179851.3"/>
</dbReference>
<dbReference type="SMR" id="Q9SKZ1"/>
<dbReference type="BioGRID" id="3115">
    <property type="interactions" value="2"/>
</dbReference>
<dbReference type="FunCoup" id="Q9SKZ1">
    <property type="interactions" value="2560"/>
</dbReference>
<dbReference type="IntAct" id="Q9SKZ1">
    <property type="interactions" value="2"/>
</dbReference>
<dbReference type="STRING" id="3702.Q9SKZ1"/>
<dbReference type="GlyGen" id="Q9SKZ1">
    <property type="glycosylation" value="2 sites, 1 O-linked glycan (2 sites)"/>
</dbReference>
<dbReference type="iPTMnet" id="Q9SKZ1"/>
<dbReference type="MetOSite" id="Q9SKZ1"/>
<dbReference type="PaxDb" id="3702-AT2G32080.1"/>
<dbReference type="ProteomicsDB" id="226019">
    <molecule id="Q9SKZ1-1"/>
</dbReference>
<dbReference type="DNASU" id="817768"/>
<dbReference type="EnsemblPlants" id="AT2G32080.1">
    <molecule id="Q9SKZ1-1"/>
    <property type="protein sequence ID" value="AT2G32080.1"/>
    <property type="gene ID" value="AT2G32080"/>
</dbReference>
<dbReference type="EnsemblPlants" id="AT2G32080.2">
    <molecule id="Q9SKZ1-2"/>
    <property type="protein sequence ID" value="AT2G32080.2"/>
    <property type="gene ID" value="AT2G32080"/>
</dbReference>
<dbReference type="GeneID" id="817768"/>
<dbReference type="Gramene" id="AT2G32080.1">
    <molecule id="Q9SKZ1-1"/>
    <property type="protein sequence ID" value="AT2G32080.1"/>
    <property type="gene ID" value="AT2G32080"/>
</dbReference>
<dbReference type="Gramene" id="AT2G32080.2">
    <molecule id="Q9SKZ1-2"/>
    <property type="protein sequence ID" value="AT2G32080.2"/>
    <property type="gene ID" value="AT2G32080"/>
</dbReference>
<dbReference type="KEGG" id="ath:AT2G32080"/>
<dbReference type="Araport" id="AT2G32080"/>
<dbReference type="TAIR" id="AT2G32080">
    <property type="gene designation" value="PUR ALPHA-1"/>
</dbReference>
<dbReference type="eggNOG" id="KOG3074">
    <property type="taxonomic scope" value="Eukaryota"/>
</dbReference>
<dbReference type="HOGENOM" id="CLU_057873_0_1_1"/>
<dbReference type="InParanoid" id="Q9SKZ1"/>
<dbReference type="OMA" id="TIPEHHW"/>
<dbReference type="OrthoDB" id="523901at2759"/>
<dbReference type="PhylomeDB" id="Q9SKZ1"/>
<dbReference type="CD-CODE" id="4299E36E">
    <property type="entry name" value="Nucleolus"/>
</dbReference>
<dbReference type="PRO" id="PR:Q9SKZ1"/>
<dbReference type="Proteomes" id="UP000006548">
    <property type="component" value="Chromosome 2"/>
</dbReference>
<dbReference type="ExpressionAtlas" id="Q9SKZ1">
    <property type="expression patterns" value="baseline and differential"/>
</dbReference>
<dbReference type="GO" id="GO:0005737">
    <property type="term" value="C:cytoplasm"/>
    <property type="evidence" value="ECO:0007005"/>
    <property type="project" value="TAIR"/>
</dbReference>
<dbReference type="GO" id="GO:0005634">
    <property type="term" value="C:nucleus"/>
    <property type="evidence" value="ECO:0007669"/>
    <property type="project" value="UniProtKB-SubCell"/>
</dbReference>
<dbReference type="GO" id="GO:0005777">
    <property type="term" value="C:peroxisome"/>
    <property type="evidence" value="ECO:0007005"/>
    <property type="project" value="TAIR"/>
</dbReference>
<dbReference type="GO" id="GO:0003729">
    <property type="term" value="F:mRNA binding"/>
    <property type="evidence" value="ECO:0000314"/>
    <property type="project" value="TAIR"/>
</dbReference>
<dbReference type="GO" id="GO:0032422">
    <property type="term" value="F:purine-rich negative regulatory element binding"/>
    <property type="evidence" value="ECO:0007669"/>
    <property type="project" value="InterPro"/>
</dbReference>
<dbReference type="GO" id="GO:0000977">
    <property type="term" value="F:RNA polymerase II transcription regulatory region sequence-specific DNA binding"/>
    <property type="evidence" value="ECO:0007669"/>
    <property type="project" value="InterPro"/>
</dbReference>
<dbReference type="FunFam" id="3.10.450.700:FF:000002">
    <property type="entry name" value="Transcription factor Pur-alpha 1"/>
    <property type="match status" value="2"/>
</dbReference>
<dbReference type="FunFam" id="3.10.450.700:FF:000003">
    <property type="entry name" value="transcription factor Pur-alpha 1"/>
    <property type="match status" value="1"/>
</dbReference>
<dbReference type="Gene3D" id="3.10.450.700">
    <property type="match status" value="3"/>
</dbReference>
<dbReference type="InterPro" id="IPR006628">
    <property type="entry name" value="PUR-bd_fam"/>
</dbReference>
<dbReference type="PANTHER" id="PTHR12611">
    <property type="entry name" value="PUR-TRANSCRIPTIONAL ACTIVATOR"/>
    <property type="match status" value="1"/>
</dbReference>
<dbReference type="PANTHER" id="PTHR12611:SF0">
    <property type="entry name" value="PURINE-RICH BINDING PROTEIN-ALPHA, ISOFORM B"/>
    <property type="match status" value="1"/>
</dbReference>
<dbReference type="Pfam" id="PF04845">
    <property type="entry name" value="PurA"/>
    <property type="match status" value="2"/>
</dbReference>
<dbReference type="SMART" id="SM00712">
    <property type="entry name" value="PUR"/>
    <property type="match status" value="3"/>
</dbReference>
<name>PUR_ARATH</name>
<sequence>MEANSGGGGGAEGGRAVTGGGGGGGGSDVELVSKTLQVEHKLFYFDLKENPRGRYLKISEKTSATRSTIIVPSSGISWFLDLFNYYVNSEEHELFSKELQLDSKVFYFDIGENRRGRFLKVSEASVSRNRSTIIVPAGSSPDEGWAAFRNILAEIHEASGLFVMPNQVKPSDGQEHLVDDVGAGFIPGHGSQQPSSSEHNVDRTIDSPGQEETGMTGVSKVIRADQKRFFFDLGNNNRGHFLRISEVAGSDRSSIILPLSGLKQFHEVIGHFVEITKDKIEGMTGANVRTVDPPQR</sequence>
<feature type="chain" id="PRO_0000330767" description="Transcription factor Pur-alpha 1">
    <location>
        <begin position="1"/>
        <end position="296"/>
    </location>
</feature>
<feature type="region of interest" description="Disordered" evidence="1">
    <location>
        <begin position="1"/>
        <end position="25"/>
    </location>
</feature>
<feature type="region of interest" description="Disordered" evidence="1">
    <location>
        <begin position="186"/>
        <end position="214"/>
    </location>
</feature>
<feature type="modified residue" description="N-acetylmethionine" evidence="9">
    <location>
        <position position="1"/>
    </location>
</feature>
<feature type="modified residue" description="Phosphoserine" evidence="7 8">
    <location>
        <position position="207"/>
    </location>
</feature>
<feature type="splice variant" id="VSP_033113" description="In isoform 2." evidence="5">
    <location>
        <position position="168"/>
    </location>
</feature>